<protein>
    <recommendedName>
        <fullName evidence="4">Protein PLASTID MOVEMENT IMPAIRED 1-RELATED 2</fullName>
    </recommendedName>
</protein>
<keyword id="KW-1185">Reference proteome</keyword>
<gene>
    <name evidence="4" type="primary">PMIR2</name>
    <name evidence="5" type="ordered locus">At5g26160</name>
    <name evidence="6" type="ORF">T19G15</name>
    <name evidence="7" type="ORF">T1N24</name>
</gene>
<name>PMIR2_ARATH</name>
<accession>Q7Y219</accession>
<proteinExistence type="evidence at transcript level"/>
<sequence>MSVNDREDSSADLYNGQLLRDIKEVSKALYLTNGPQRPVLSLSPPVRSQSVSRTTEIGLVLSNKKKKSLVPWNWKKPLNAIAHFGQRRFDVCFLLHVHSIEGLPLNLDGTKLVVQWKRKDEVMTTQPSKVLQGTAEFEETLTHRCSVYGSKHGPHRSAKYQVKLFLIYVSPVDAPWLVLGKHWIDLTRILPLSLEEMEGTRSTRKWNTSFKLSGLAESAVLNLSFDYSVVTSSVCDSTSKNVMLRRVGSVPSMDHRSPPLDDGKVVNEVSPSLSLNLSQSIDFLYEKLGEQNPQRSTGTEVELGLETDKQAADSDDSGKGVETFQQERSGLEESNDPNTESSRIEIIDVHEILKDEDESVFEETYFIDQLSVAALKSEPSNLLPKHSVDGTPKSTFSSQVISESSESKSPSAMDDSTEKENFLEVKSSYKAAKISMTSLSLDDITESVANDFLNMLELEECSYVYTSDGEPTSPRESLLREFEKEAFASGNFLLDLNGEAEYVSDIDEKSNDFSFSASSLDVGENKREGKSQLLIDRRKAKVLEDLETETLLRECDFDDNSFDNSLCVCSDGFGSPIELPVDKGLDLLPLGDNIGPSVWTKGGGCIRSMNHLLFRESKEASQLIMQVSVPVVLVSELGSDILEILQIFAASGIEGLCSEVNALIPLEDIMGKTIHEVVDVTKFKRTGQDCSDKSKGVVVQKPPGQLHLCSSNEEFGSSMCPSNVPLEDVTSLAIDEIYILSIEGLKIQCSMSDQDPPSGIAPKPMDQSDALELIRFSLTLDEWLRLDQGMLENKDQDLASNGKGHTLRNKLTLALQVLLRDPSLNNEPIGASMLALIQVERSLDSPNSSLCSLAQEGRNKESFGYDTQLWRITEIGLAGLKIEPGADHPWCTKSQQQSGSRWLLANGTDKTIKCQASESKVIIVSNVQATRKRLDTLWSIISDRHHQEGDLSNSAASVPFTRNLDVIFSNEVTERS</sequence>
<evidence type="ECO:0000255" key="1">
    <source>
        <dbReference type="PROSITE-ProRule" id="PRU01186"/>
    </source>
</evidence>
<evidence type="ECO:0000256" key="2">
    <source>
        <dbReference type="SAM" id="MobiDB-lite"/>
    </source>
</evidence>
<evidence type="ECO:0000269" key="3">
    <source>
    </source>
</evidence>
<evidence type="ECO:0000303" key="4">
    <source>
    </source>
</evidence>
<evidence type="ECO:0000312" key="5">
    <source>
        <dbReference type="Araport" id="AT5G26160"/>
    </source>
</evidence>
<evidence type="ECO:0000312" key="6">
    <source>
        <dbReference type="EMBL" id="AC005965"/>
    </source>
</evidence>
<evidence type="ECO:0000312" key="7">
    <source>
        <dbReference type="EMBL" id="AF149413"/>
    </source>
</evidence>
<feature type="chain" id="PRO_0000435992" description="Protein PLASTID MOVEMENT IMPAIRED 1-RELATED 2">
    <location>
        <begin position="1"/>
        <end position="976"/>
    </location>
</feature>
<feature type="domain" description="C2 NT-type" evidence="1">
    <location>
        <begin position="81"/>
        <end position="229"/>
    </location>
</feature>
<feature type="region of interest" description="Disordered" evidence="2">
    <location>
        <begin position="309"/>
        <end position="343"/>
    </location>
</feature>
<feature type="region of interest" description="Disordered" evidence="2">
    <location>
        <begin position="381"/>
        <end position="419"/>
    </location>
</feature>
<feature type="compositionally biased region" description="Basic and acidic residues" evidence="2">
    <location>
        <begin position="309"/>
        <end position="319"/>
    </location>
</feature>
<feature type="compositionally biased region" description="Low complexity" evidence="2">
    <location>
        <begin position="394"/>
        <end position="414"/>
    </location>
</feature>
<dbReference type="EMBL" id="AC005965">
    <property type="status" value="NOT_ANNOTATED_CDS"/>
    <property type="molecule type" value="Genomic_DNA"/>
</dbReference>
<dbReference type="EMBL" id="AF149413">
    <property type="status" value="NOT_ANNOTATED_CDS"/>
    <property type="molecule type" value="Genomic_DNA"/>
</dbReference>
<dbReference type="EMBL" id="CP002688">
    <property type="protein sequence ID" value="AED93531.1"/>
    <property type="molecule type" value="Genomic_DNA"/>
</dbReference>
<dbReference type="EMBL" id="CP002688">
    <property type="protein sequence ID" value="ANM71066.1"/>
    <property type="molecule type" value="Genomic_DNA"/>
</dbReference>
<dbReference type="EMBL" id="BT008610">
    <property type="protein sequence ID" value="AAP40435.1"/>
    <property type="molecule type" value="mRNA"/>
</dbReference>
<dbReference type="EMBL" id="AK228491">
    <property type="protein sequence ID" value="BAF00417.1"/>
    <property type="molecule type" value="mRNA"/>
</dbReference>
<dbReference type="RefSeq" id="NP_001332622.1">
    <property type="nucleotide sequence ID" value="NM_001343963.1"/>
</dbReference>
<dbReference type="RefSeq" id="NP_197988.3">
    <property type="nucleotide sequence ID" value="NM_122517.5"/>
</dbReference>
<dbReference type="FunCoup" id="Q7Y219">
    <property type="interactions" value="95"/>
</dbReference>
<dbReference type="STRING" id="3702.Q7Y219"/>
<dbReference type="PaxDb" id="3702-AT5G26160.1"/>
<dbReference type="ProteomicsDB" id="226193"/>
<dbReference type="EnsemblPlants" id="AT5G26160.1">
    <property type="protein sequence ID" value="AT5G26160.1"/>
    <property type="gene ID" value="AT5G26160"/>
</dbReference>
<dbReference type="EnsemblPlants" id="AT5G26160.2">
    <property type="protein sequence ID" value="AT5G26160.2"/>
    <property type="gene ID" value="AT5G26160"/>
</dbReference>
<dbReference type="GeneID" id="832685"/>
<dbReference type="Gramene" id="AT5G26160.1">
    <property type="protein sequence ID" value="AT5G26160.1"/>
    <property type="gene ID" value="AT5G26160"/>
</dbReference>
<dbReference type="Gramene" id="AT5G26160.2">
    <property type="protein sequence ID" value="AT5G26160.2"/>
    <property type="gene ID" value="AT5G26160"/>
</dbReference>
<dbReference type="KEGG" id="ath:AT5G26160"/>
<dbReference type="Araport" id="AT5G26160"/>
<dbReference type="TAIR" id="AT5G26160">
    <property type="gene designation" value="PMIR2"/>
</dbReference>
<dbReference type="eggNOG" id="ENOG502RCB9">
    <property type="taxonomic scope" value="Eukaryota"/>
</dbReference>
<dbReference type="HOGENOM" id="CLU_003931_0_0_1"/>
<dbReference type="InParanoid" id="Q7Y219"/>
<dbReference type="OMA" id="IIEGDQN"/>
<dbReference type="OrthoDB" id="2019483at2759"/>
<dbReference type="PhylomeDB" id="Q7Y219"/>
<dbReference type="PRO" id="PR:Q7Y219"/>
<dbReference type="Proteomes" id="UP000006548">
    <property type="component" value="Chromosome 5"/>
</dbReference>
<dbReference type="ExpressionAtlas" id="Q7Y219">
    <property type="expression patterns" value="baseline and differential"/>
</dbReference>
<dbReference type="InterPro" id="IPR019448">
    <property type="entry name" value="NT-C2"/>
</dbReference>
<dbReference type="InterPro" id="IPR039614">
    <property type="entry name" value="PMI1-like"/>
</dbReference>
<dbReference type="InterPro" id="IPR048972">
    <property type="entry name" value="PMI1_PMIR1-2_C"/>
</dbReference>
<dbReference type="PANTHER" id="PTHR33414">
    <property type="entry name" value="PROTEIN PLASTID MOVEMENT IMPAIRED 1-RELATED 1"/>
    <property type="match status" value="1"/>
</dbReference>
<dbReference type="PANTHER" id="PTHR33414:SF10">
    <property type="entry name" value="PROTEIN PLASTID MOVEMENT IMPAIRED 1-RELATED 2"/>
    <property type="match status" value="1"/>
</dbReference>
<dbReference type="Pfam" id="PF10358">
    <property type="entry name" value="NT-C2"/>
    <property type="match status" value="1"/>
</dbReference>
<dbReference type="Pfam" id="PF21745">
    <property type="entry name" value="PMI1_PMIR1-2_C"/>
    <property type="match status" value="1"/>
</dbReference>
<dbReference type="PROSITE" id="PS51840">
    <property type="entry name" value="C2_NT"/>
    <property type="match status" value="1"/>
</dbReference>
<organism>
    <name type="scientific">Arabidopsis thaliana</name>
    <name type="common">Mouse-ear cress</name>
    <dbReference type="NCBI Taxonomy" id="3702"/>
    <lineage>
        <taxon>Eukaryota</taxon>
        <taxon>Viridiplantae</taxon>
        <taxon>Streptophyta</taxon>
        <taxon>Embryophyta</taxon>
        <taxon>Tracheophyta</taxon>
        <taxon>Spermatophyta</taxon>
        <taxon>Magnoliopsida</taxon>
        <taxon>eudicotyledons</taxon>
        <taxon>Gunneridae</taxon>
        <taxon>Pentapetalae</taxon>
        <taxon>rosids</taxon>
        <taxon>malvids</taxon>
        <taxon>Brassicales</taxon>
        <taxon>Brassicaceae</taxon>
        <taxon>Camelineae</taxon>
        <taxon>Arabidopsis</taxon>
    </lineage>
</organism>
<comment type="function">
    <text evidence="3">Seems not necessary for chloroplast and nuclear photorelocation movements.</text>
</comment>
<reference key="1">
    <citation type="journal article" date="2000" name="Nature">
        <title>Sequence and analysis of chromosome 5 of the plant Arabidopsis thaliana.</title>
        <authorList>
            <person name="Tabata S."/>
            <person name="Kaneko T."/>
            <person name="Nakamura Y."/>
            <person name="Kotani H."/>
            <person name="Kato T."/>
            <person name="Asamizu E."/>
            <person name="Miyajima N."/>
            <person name="Sasamoto S."/>
            <person name="Kimura T."/>
            <person name="Hosouchi T."/>
            <person name="Kawashima K."/>
            <person name="Kohara M."/>
            <person name="Matsumoto M."/>
            <person name="Matsuno A."/>
            <person name="Muraki A."/>
            <person name="Nakayama S."/>
            <person name="Nakazaki N."/>
            <person name="Naruo K."/>
            <person name="Okumura S."/>
            <person name="Shinpo S."/>
            <person name="Takeuchi C."/>
            <person name="Wada T."/>
            <person name="Watanabe A."/>
            <person name="Yamada M."/>
            <person name="Yasuda M."/>
            <person name="Sato S."/>
            <person name="de la Bastide M."/>
            <person name="Huang E."/>
            <person name="Spiegel L."/>
            <person name="Gnoj L."/>
            <person name="O'Shaughnessy A."/>
            <person name="Preston R."/>
            <person name="Habermann K."/>
            <person name="Murray J."/>
            <person name="Johnson D."/>
            <person name="Rohlfing T."/>
            <person name="Nelson J."/>
            <person name="Stoneking T."/>
            <person name="Pepin K."/>
            <person name="Spieth J."/>
            <person name="Sekhon M."/>
            <person name="Armstrong J."/>
            <person name="Becker M."/>
            <person name="Belter E."/>
            <person name="Cordum H."/>
            <person name="Cordes M."/>
            <person name="Courtney L."/>
            <person name="Courtney W."/>
            <person name="Dante M."/>
            <person name="Du H."/>
            <person name="Edwards J."/>
            <person name="Fryman J."/>
            <person name="Haakensen B."/>
            <person name="Lamar E."/>
            <person name="Latreille P."/>
            <person name="Leonard S."/>
            <person name="Meyer R."/>
            <person name="Mulvaney E."/>
            <person name="Ozersky P."/>
            <person name="Riley A."/>
            <person name="Strowmatt C."/>
            <person name="Wagner-McPherson C."/>
            <person name="Wollam A."/>
            <person name="Yoakum M."/>
            <person name="Bell M."/>
            <person name="Dedhia N."/>
            <person name="Parnell L."/>
            <person name="Shah R."/>
            <person name="Rodriguez M."/>
            <person name="Hoon See L."/>
            <person name="Vil D."/>
            <person name="Baker J."/>
            <person name="Kirchoff K."/>
            <person name="Toth K."/>
            <person name="King L."/>
            <person name="Bahret A."/>
            <person name="Miller B."/>
            <person name="Marra M.A."/>
            <person name="Martienssen R."/>
            <person name="McCombie W.R."/>
            <person name="Wilson R.K."/>
            <person name="Murphy G."/>
            <person name="Bancroft I."/>
            <person name="Volckaert G."/>
            <person name="Wambutt R."/>
            <person name="Duesterhoeft A."/>
            <person name="Stiekema W."/>
            <person name="Pohl T."/>
            <person name="Entian K.-D."/>
            <person name="Terryn N."/>
            <person name="Hartley N."/>
            <person name="Bent E."/>
            <person name="Johnson S."/>
            <person name="Langham S.-A."/>
            <person name="McCullagh B."/>
            <person name="Robben J."/>
            <person name="Grymonprez B."/>
            <person name="Zimmermann W."/>
            <person name="Ramsperger U."/>
            <person name="Wedler H."/>
            <person name="Balke K."/>
            <person name="Wedler E."/>
            <person name="Peters S."/>
            <person name="van Staveren M."/>
            <person name="Dirkse W."/>
            <person name="Mooijman P."/>
            <person name="Klein Lankhorst R."/>
            <person name="Weitzenegger T."/>
            <person name="Bothe G."/>
            <person name="Rose M."/>
            <person name="Hauf J."/>
            <person name="Berneiser S."/>
            <person name="Hempel S."/>
            <person name="Feldpausch M."/>
            <person name="Lamberth S."/>
            <person name="Villarroel R."/>
            <person name="Gielen J."/>
            <person name="Ardiles W."/>
            <person name="Bents O."/>
            <person name="Lemcke K."/>
            <person name="Kolesov G."/>
            <person name="Mayer K.F.X."/>
            <person name="Rudd S."/>
            <person name="Schoof H."/>
            <person name="Schueller C."/>
            <person name="Zaccaria P."/>
            <person name="Mewes H.-W."/>
            <person name="Bevan M."/>
            <person name="Fransz P.F."/>
        </authorList>
    </citation>
    <scope>NUCLEOTIDE SEQUENCE [LARGE SCALE GENOMIC DNA]</scope>
    <source>
        <strain>cv. Columbia</strain>
    </source>
</reference>
<reference key="2">
    <citation type="journal article" date="2017" name="Plant J.">
        <title>Araport11: a complete reannotation of the Arabidopsis thaliana reference genome.</title>
        <authorList>
            <person name="Cheng C.Y."/>
            <person name="Krishnakumar V."/>
            <person name="Chan A.P."/>
            <person name="Thibaud-Nissen F."/>
            <person name="Schobel S."/>
            <person name="Town C.D."/>
        </authorList>
    </citation>
    <scope>GENOME REANNOTATION</scope>
    <source>
        <strain>cv. Columbia</strain>
    </source>
</reference>
<reference key="3">
    <citation type="journal article" date="2003" name="Science">
        <title>Empirical analysis of transcriptional activity in the Arabidopsis genome.</title>
        <authorList>
            <person name="Yamada K."/>
            <person name="Lim J."/>
            <person name="Dale J.M."/>
            <person name="Chen H."/>
            <person name="Shinn P."/>
            <person name="Palm C.J."/>
            <person name="Southwick A.M."/>
            <person name="Wu H.C."/>
            <person name="Kim C.J."/>
            <person name="Nguyen M."/>
            <person name="Pham P.K."/>
            <person name="Cheuk R.F."/>
            <person name="Karlin-Newmann G."/>
            <person name="Liu S.X."/>
            <person name="Lam B."/>
            <person name="Sakano H."/>
            <person name="Wu T."/>
            <person name="Yu G."/>
            <person name="Miranda M."/>
            <person name="Quach H.L."/>
            <person name="Tripp M."/>
            <person name="Chang C.H."/>
            <person name="Lee J.M."/>
            <person name="Toriumi M.J."/>
            <person name="Chan M.M."/>
            <person name="Tang C.C."/>
            <person name="Onodera C.S."/>
            <person name="Deng J.M."/>
            <person name="Akiyama K."/>
            <person name="Ansari Y."/>
            <person name="Arakawa T."/>
            <person name="Banh J."/>
            <person name="Banno F."/>
            <person name="Bowser L."/>
            <person name="Brooks S.Y."/>
            <person name="Carninci P."/>
            <person name="Chao Q."/>
            <person name="Choy N."/>
            <person name="Enju A."/>
            <person name="Goldsmith A.D."/>
            <person name="Gurjal M."/>
            <person name="Hansen N.F."/>
            <person name="Hayashizaki Y."/>
            <person name="Johnson-Hopson C."/>
            <person name="Hsuan V.W."/>
            <person name="Iida K."/>
            <person name="Karnes M."/>
            <person name="Khan S."/>
            <person name="Koesema E."/>
            <person name="Ishida J."/>
            <person name="Jiang P.X."/>
            <person name="Jones T."/>
            <person name="Kawai J."/>
            <person name="Kamiya A."/>
            <person name="Meyers C."/>
            <person name="Nakajima M."/>
            <person name="Narusaka M."/>
            <person name="Seki M."/>
            <person name="Sakurai T."/>
            <person name="Satou M."/>
            <person name="Tamse R."/>
            <person name="Vaysberg M."/>
            <person name="Wallender E.K."/>
            <person name="Wong C."/>
            <person name="Yamamura Y."/>
            <person name="Yuan S."/>
            <person name="Shinozaki K."/>
            <person name="Davis R.W."/>
            <person name="Theologis A."/>
            <person name="Ecker J.R."/>
        </authorList>
    </citation>
    <scope>NUCLEOTIDE SEQUENCE [LARGE SCALE MRNA]</scope>
    <source>
        <strain>cv. Columbia</strain>
    </source>
</reference>
<reference key="4">
    <citation type="submission" date="2006-07" db="EMBL/GenBank/DDBJ databases">
        <title>Large-scale analysis of RIKEN Arabidopsis full-length (RAFL) cDNAs.</title>
        <authorList>
            <person name="Totoki Y."/>
            <person name="Seki M."/>
            <person name="Ishida J."/>
            <person name="Nakajima M."/>
            <person name="Enju A."/>
            <person name="Kamiya A."/>
            <person name="Narusaka M."/>
            <person name="Shin-i T."/>
            <person name="Nakagawa M."/>
            <person name="Sakamoto N."/>
            <person name="Oishi K."/>
            <person name="Kohara Y."/>
            <person name="Kobayashi M."/>
            <person name="Toyoda A."/>
            <person name="Sakaki Y."/>
            <person name="Sakurai T."/>
            <person name="Iida K."/>
            <person name="Akiyama K."/>
            <person name="Satou M."/>
            <person name="Toyoda T."/>
            <person name="Konagaya A."/>
            <person name="Carninci P."/>
            <person name="Kawai J."/>
            <person name="Hayashizaki Y."/>
            <person name="Shinozaki K."/>
        </authorList>
    </citation>
    <scope>NUCLEOTIDE SEQUENCE [LARGE SCALE MRNA]</scope>
    <source>
        <strain>cv. Columbia</strain>
    </source>
</reference>
<reference key="5">
    <citation type="journal article" date="2015" name="Plant Physiol.">
        <title>PLASTID MOVEMENT IMPAIRED1 and PLASTID MOVEMENT IMPAIRED1-RELATED1 mediate photorelocation movements of both chloroplasts and nuclei.</title>
        <authorList>
            <person name="Suetsugu N."/>
            <person name="Higa T."/>
            <person name="Kong S.-G."/>
            <person name="Wada M."/>
        </authorList>
    </citation>
    <scope>FUNCTION</scope>
    <source>
        <strain>cv. Columbia GL1</strain>
    </source>
</reference>